<reference key="1">
    <citation type="journal article" date="2001" name="Nature">
        <title>Genome sequence of enterohaemorrhagic Escherichia coli O157:H7.</title>
        <authorList>
            <person name="Perna N.T."/>
            <person name="Plunkett G. III"/>
            <person name="Burland V."/>
            <person name="Mau B."/>
            <person name="Glasner J.D."/>
            <person name="Rose D.J."/>
            <person name="Mayhew G.F."/>
            <person name="Evans P.S."/>
            <person name="Gregor J."/>
            <person name="Kirkpatrick H.A."/>
            <person name="Posfai G."/>
            <person name="Hackett J."/>
            <person name="Klink S."/>
            <person name="Boutin A."/>
            <person name="Shao Y."/>
            <person name="Miller L."/>
            <person name="Grotbeck E.J."/>
            <person name="Davis N.W."/>
            <person name="Lim A."/>
            <person name="Dimalanta E.T."/>
            <person name="Potamousis K."/>
            <person name="Apodaca J."/>
            <person name="Anantharaman T.S."/>
            <person name="Lin J."/>
            <person name="Yen G."/>
            <person name="Schwartz D.C."/>
            <person name="Welch R.A."/>
            <person name="Blattner F.R."/>
        </authorList>
    </citation>
    <scope>NUCLEOTIDE SEQUENCE [LARGE SCALE GENOMIC DNA]</scope>
    <source>
        <strain>O157:H7 / EDL933 / ATCC 700927 / EHEC</strain>
    </source>
</reference>
<reference key="2">
    <citation type="journal article" date="2001" name="DNA Res.">
        <title>Complete genome sequence of enterohemorrhagic Escherichia coli O157:H7 and genomic comparison with a laboratory strain K-12.</title>
        <authorList>
            <person name="Hayashi T."/>
            <person name="Makino K."/>
            <person name="Ohnishi M."/>
            <person name="Kurokawa K."/>
            <person name="Ishii K."/>
            <person name="Yokoyama K."/>
            <person name="Han C.-G."/>
            <person name="Ohtsubo E."/>
            <person name="Nakayama K."/>
            <person name="Murata T."/>
            <person name="Tanaka M."/>
            <person name="Tobe T."/>
            <person name="Iida T."/>
            <person name="Takami H."/>
            <person name="Honda T."/>
            <person name="Sasakawa C."/>
            <person name="Ogasawara N."/>
            <person name="Yasunaga T."/>
            <person name="Kuhara S."/>
            <person name="Shiba T."/>
            <person name="Hattori M."/>
            <person name="Shinagawa H."/>
        </authorList>
    </citation>
    <scope>NUCLEOTIDE SEQUENCE [LARGE SCALE GENOMIC DNA]</scope>
    <source>
        <strain>O157:H7 / Sakai / RIMD 0509952 / EHEC</strain>
    </source>
</reference>
<dbReference type="EMBL" id="AE005174">
    <property type="protein sequence ID" value="AAG59116.1"/>
    <property type="molecule type" value="Genomic_DNA"/>
</dbReference>
<dbReference type="EMBL" id="BA000007">
    <property type="protein sequence ID" value="BAB38271.1"/>
    <property type="molecule type" value="Genomic_DNA"/>
</dbReference>
<dbReference type="PIR" id="H86081">
    <property type="entry name" value="H86081"/>
</dbReference>
<dbReference type="PIR" id="H91234">
    <property type="entry name" value="H91234"/>
</dbReference>
<dbReference type="RefSeq" id="NP_312875.1">
    <property type="nucleotide sequence ID" value="NC_002695.1"/>
</dbReference>
<dbReference type="RefSeq" id="WP_000323555.1">
    <property type="nucleotide sequence ID" value="NZ_VOAI01000016.1"/>
</dbReference>
<dbReference type="SMR" id="P67090"/>
<dbReference type="STRING" id="155864.Z5468"/>
<dbReference type="GeneID" id="75169363"/>
<dbReference type="GeneID" id="915045"/>
<dbReference type="KEGG" id="ece:Z5468"/>
<dbReference type="KEGG" id="ecs:ECs_4848"/>
<dbReference type="PATRIC" id="fig|386585.9.peg.5070"/>
<dbReference type="eggNOG" id="COG0589">
    <property type="taxonomic scope" value="Bacteria"/>
</dbReference>
<dbReference type="HOGENOM" id="CLU_049301_18_0_6"/>
<dbReference type="OMA" id="RRMINKM"/>
<dbReference type="Proteomes" id="UP000000558">
    <property type="component" value="Chromosome"/>
</dbReference>
<dbReference type="Proteomes" id="UP000002519">
    <property type="component" value="Chromosome"/>
</dbReference>
<dbReference type="GO" id="GO:0005737">
    <property type="term" value="C:cytoplasm"/>
    <property type="evidence" value="ECO:0007669"/>
    <property type="project" value="UniProtKB-SubCell"/>
</dbReference>
<dbReference type="CDD" id="cd23657">
    <property type="entry name" value="USP-A-like"/>
    <property type="match status" value="1"/>
</dbReference>
<dbReference type="FunFam" id="3.40.50.620:FF:000065">
    <property type="entry name" value="Universal stress protein"/>
    <property type="match status" value="1"/>
</dbReference>
<dbReference type="Gene3D" id="3.40.50.620">
    <property type="entry name" value="HUPs"/>
    <property type="match status" value="1"/>
</dbReference>
<dbReference type="InterPro" id="IPR014729">
    <property type="entry name" value="Rossmann-like_a/b/a_fold"/>
</dbReference>
<dbReference type="InterPro" id="IPR006015">
    <property type="entry name" value="Universal_stress_UspA"/>
</dbReference>
<dbReference type="InterPro" id="IPR006016">
    <property type="entry name" value="UspA"/>
</dbReference>
<dbReference type="NCBIfam" id="NF007436">
    <property type="entry name" value="PRK09982.1"/>
    <property type="match status" value="1"/>
</dbReference>
<dbReference type="Pfam" id="PF00582">
    <property type="entry name" value="Usp"/>
    <property type="match status" value="1"/>
</dbReference>
<dbReference type="PIRSF" id="PIRSF006276">
    <property type="entry name" value="UspA"/>
    <property type="match status" value="1"/>
</dbReference>
<dbReference type="SUPFAM" id="SSF52402">
    <property type="entry name" value="Adenine nucleotide alpha hydrolases-like"/>
    <property type="match status" value="1"/>
</dbReference>
<name>USPD_ECO57</name>
<gene>
    <name type="primary">uspD</name>
    <name type="ordered locus">Z5468</name>
    <name type="ordered locus">ECs4848</name>
</gene>
<sequence length="142" mass="16275">MAYKHIGVAISGNEEDALLVNKALELARHNDAHLTLIHIDDGLSELYPGIYFPATEDILQLLKNKSDNKLYKLTKNIQWPKTKLRIERGEMPETLLEIMQKEQCDLLVCGHHHSFINRLMPAYRGMINKLSADLLIVPFIDK</sequence>
<organism>
    <name type="scientific">Escherichia coli O157:H7</name>
    <dbReference type="NCBI Taxonomy" id="83334"/>
    <lineage>
        <taxon>Bacteria</taxon>
        <taxon>Pseudomonadati</taxon>
        <taxon>Pseudomonadota</taxon>
        <taxon>Gammaproteobacteria</taxon>
        <taxon>Enterobacterales</taxon>
        <taxon>Enterobacteriaceae</taxon>
        <taxon>Escherichia</taxon>
    </lineage>
</organism>
<proteinExistence type="inferred from homology"/>
<accession>P67090</accession>
<accession>Q8FBC5</accession>
<accession>Q8X4Q5</accession>
<keyword id="KW-0963">Cytoplasm</keyword>
<keyword id="KW-1185">Reference proteome</keyword>
<feature type="chain" id="PRO_0000147415" description="Universal stress protein D">
    <location>
        <begin position="1"/>
        <end position="142"/>
    </location>
</feature>
<protein>
    <recommendedName>
        <fullName>Universal stress protein D</fullName>
    </recommendedName>
</protein>
<comment type="function">
    <text evidence="1">Required for resistance to DNA-damaging agents.</text>
</comment>
<comment type="subcellular location">
    <subcellularLocation>
        <location evidence="1">Cytoplasm</location>
    </subcellularLocation>
</comment>
<comment type="similarity">
    <text evidence="2">Belongs to the universal stress protein A family.</text>
</comment>
<evidence type="ECO:0000250" key="1"/>
<evidence type="ECO:0000305" key="2"/>